<comment type="function">
    <text evidence="2">This is a key enzyme of plant metabolism catalyzing the first reaction in the biosynthesis from L-phenylalanine of a wide variety of natural products based on the phenylpropane skeleton.</text>
</comment>
<comment type="catalytic activity">
    <reaction evidence="2">
        <text>L-phenylalanine = (E)-cinnamate + NH4(+)</text>
        <dbReference type="Rhea" id="RHEA:21384"/>
        <dbReference type="ChEBI" id="CHEBI:15669"/>
        <dbReference type="ChEBI" id="CHEBI:28938"/>
        <dbReference type="ChEBI" id="CHEBI:58095"/>
        <dbReference type="EC" id="4.3.1.24"/>
    </reaction>
</comment>
<comment type="pathway">
    <text evidence="5">Phenylpropanoid metabolism; trans-cinnamate biosynthesis; trans-cinnamate from L-phenylalanine: step 1/1.</text>
</comment>
<comment type="subunit">
    <text evidence="2">Homotetramer.</text>
</comment>
<comment type="subcellular location">
    <subcellularLocation>
        <location evidence="5">Cytoplasm</location>
    </subcellularLocation>
</comment>
<comment type="PTM">
    <text evidence="3">Contains an active site 4-methylidene-imidazol-5-one (MIO), which is formed autocatalytically by cyclization and dehydration of residues Ala-Ser-Gly.</text>
</comment>
<comment type="similarity">
    <text evidence="5">Belongs to the PAL/histidase family.</text>
</comment>
<accession>P19142</accession>
<dbReference type="EC" id="4.3.1.24" evidence="2"/>
<dbReference type="PIR" id="S04127">
    <property type="entry name" value="S04127"/>
</dbReference>
<dbReference type="SMR" id="P19142"/>
<dbReference type="eggNOG" id="KOG0222">
    <property type="taxonomic scope" value="Eukaryota"/>
</dbReference>
<dbReference type="UniPathway" id="UPA00713">
    <property type="reaction ID" value="UER00725"/>
</dbReference>
<dbReference type="GO" id="GO:0005737">
    <property type="term" value="C:cytoplasm"/>
    <property type="evidence" value="ECO:0007669"/>
    <property type="project" value="UniProtKB-SubCell"/>
</dbReference>
<dbReference type="GO" id="GO:0045548">
    <property type="term" value="F:phenylalanine ammonia-lyase activity"/>
    <property type="evidence" value="ECO:0007669"/>
    <property type="project" value="UniProtKB-EC"/>
</dbReference>
<dbReference type="GO" id="GO:0009800">
    <property type="term" value="P:cinnamic acid biosynthetic process"/>
    <property type="evidence" value="ECO:0007669"/>
    <property type="project" value="UniProtKB-UniPathway"/>
</dbReference>
<dbReference type="GO" id="GO:0006559">
    <property type="term" value="P:L-phenylalanine catabolic process"/>
    <property type="evidence" value="ECO:0007669"/>
    <property type="project" value="UniProtKB-KW"/>
</dbReference>
<dbReference type="CDD" id="cd00332">
    <property type="entry name" value="PAL-HAL"/>
    <property type="match status" value="1"/>
</dbReference>
<dbReference type="FunFam" id="1.10.274.20:FF:000001">
    <property type="entry name" value="Phenylalanine ammonia-lyase"/>
    <property type="match status" value="1"/>
</dbReference>
<dbReference type="FunFam" id="1.10.275.10:FF:000009">
    <property type="entry name" value="Phenylalanine ammonia-lyase"/>
    <property type="match status" value="1"/>
</dbReference>
<dbReference type="FunFam" id="1.20.200.10:FF:000009">
    <property type="entry name" value="Phenylalanine ammonia-lyase"/>
    <property type="match status" value="1"/>
</dbReference>
<dbReference type="Gene3D" id="1.20.200.10">
    <property type="entry name" value="Fumarase/aspartase (Central domain)"/>
    <property type="match status" value="1"/>
</dbReference>
<dbReference type="Gene3D" id="1.10.275.10">
    <property type="entry name" value="Fumarase/aspartase (N-terminal domain)"/>
    <property type="match status" value="1"/>
</dbReference>
<dbReference type="Gene3D" id="1.10.274.20">
    <property type="entry name" value="Phenylalanine ammonia-lyase 1, domain 3"/>
    <property type="match status" value="1"/>
</dbReference>
<dbReference type="InterPro" id="IPR001106">
    <property type="entry name" value="Aromatic_Lyase"/>
</dbReference>
<dbReference type="InterPro" id="IPR024083">
    <property type="entry name" value="Fumarase/histidase_N"/>
</dbReference>
<dbReference type="InterPro" id="IPR008948">
    <property type="entry name" value="L-Aspartase-like"/>
</dbReference>
<dbReference type="InterPro" id="IPR022313">
    <property type="entry name" value="Phe/His_NH3-lyase_AS"/>
</dbReference>
<dbReference type="InterPro" id="IPR005922">
    <property type="entry name" value="Phe_NH3-lyase"/>
</dbReference>
<dbReference type="InterPro" id="IPR023144">
    <property type="entry name" value="Phe_NH3-lyase_shielding_dom_sf"/>
</dbReference>
<dbReference type="NCBIfam" id="TIGR01226">
    <property type="entry name" value="phe_am_lyase"/>
    <property type="match status" value="1"/>
</dbReference>
<dbReference type="PANTHER" id="PTHR10362">
    <property type="entry name" value="HISTIDINE AMMONIA-LYASE"/>
    <property type="match status" value="1"/>
</dbReference>
<dbReference type="Pfam" id="PF00221">
    <property type="entry name" value="Lyase_aromatic"/>
    <property type="match status" value="1"/>
</dbReference>
<dbReference type="SUPFAM" id="SSF48557">
    <property type="entry name" value="L-aspartase-like"/>
    <property type="match status" value="1"/>
</dbReference>
<dbReference type="PROSITE" id="PS00488">
    <property type="entry name" value="PAL_HISTIDASE"/>
    <property type="match status" value="1"/>
</dbReference>
<proteinExistence type="inferred from homology"/>
<organism>
    <name type="scientific">Phaseolus vulgaris</name>
    <name type="common">Kidney bean</name>
    <name type="synonym">French bean</name>
    <dbReference type="NCBI Taxonomy" id="3885"/>
    <lineage>
        <taxon>Eukaryota</taxon>
        <taxon>Viridiplantae</taxon>
        <taxon>Streptophyta</taxon>
        <taxon>Embryophyta</taxon>
        <taxon>Tracheophyta</taxon>
        <taxon>Spermatophyta</taxon>
        <taxon>Magnoliopsida</taxon>
        <taxon>eudicotyledons</taxon>
        <taxon>Gunneridae</taxon>
        <taxon>Pentapetalae</taxon>
        <taxon>rosids</taxon>
        <taxon>fabids</taxon>
        <taxon>Fabales</taxon>
        <taxon>Fabaceae</taxon>
        <taxon>Papilionoideae</taxon>
        <taxon>50 kb inversion clade</taxon>
        <taxon>NPAAA clade</taxon>
        <taxon>indigoferoid/millettioid clade</taxon>
        <taxon>Phaseoleae</taxon>
        <taxon>Phaseolus</taxon>
    </lineage>
</organism>
<keyword id="KW-0963">Cytoplasm</keyword>
<keyword id="KW-0456">Lyase</keyword>
<keyword id="KW-0585">Phenylalanine catabolism</keyword>
<keyword id="KW-0587">Phenylpropanoid metabolism</keyword>
<evidence type="ECO:0000250" key="1">
    <source>
        <dbReference type="UniProtKB" id="P11544"/>
    </source>
</evidence>
<evidence type="ECO:0000250" key="2">
    <source>
        <dbReference type="UniProtKB" id="P24481"/>
    </source>
</evidence>
<evidence type="ECO:0000250" key="3">
    <source>
        <dbReference type="UniProtKB" id="Q68G84"/>
    </source>
</evidence>
<evidence type="ECO:0000255" key="4">
    <source>
        <dbReference type="PROSITE-ProRule" id="PRU10122"/>
    </source>
</evidence>
<evidence type="ECO:0000305" key="5"/>
<name>PAL2_PHAVU</name>
<reference key="1">
    <citation type="journal article" date="1989" name="Plant Mol. Biol.">
        <title>Phenylalanine ammonia-lyase gene organisation and structure.</title>
        <authorList>
            <person name="Cramer C.L."/>
            <person name="Edwards K."/>
            <person name="Dron M."/>
            <person name="Liang X."/>
            <person name="Dildine S.L."/>
            <person name="Bolwell G.P."/>
            <person name="Dixon R.A."/>
            <person name="Lamb C.J."/>
            <person name="Schuch W."/>
        </authorList>
    </citation>
    <scope>NUCLEOTIDE SEQUENCE</scope>
</reference>
<protein>
    <recommendedName>
        <fullName>Phenylalanine ammonia-lyase class 2</fullName>
        <ecNumber evidence="2">4.3.1.24</ecNumber>
    </recommendedName>
    <alternativeName>
        <fullName>Phenylalanine ammonia-lyase class II</fullName>
    </alternativeName>
</protein>
<feature type="chain" id="PRO_0000215410" description="Phenylalanine ammonia-lyase class 2">
    <location>
        <begin position="1"/>
        <end position="712"/>
    </location>
</feature>
<feature type="active site" description="Proton donor/acceptor" evidence="3">
    <location>
        <position position="104"/>
    </location>
</feature>
<feature type="binding site" evidence="3">
    <location>
        <position position="256"/>
    </location>
    <ligand>
        <name>(E)-cinnamate</name>
        <dbReference type="ChEBI" id="CHEBI:15669"/>
    </ligand>
</feature>
<feature type="binding site" evidence="3">
    <location>
        <position position="344"/>
    </location>
    <ligand>
        <name>(E)-cinnamate</name>
        <dbReference type="ChEBI" id="CHEBI:15669"/>
    </ligand>
</feature>
<feature type="binding site" evidence="3">
    <location>
        <position position="350"/>
    </location>
    <ligand>
        <name>(E)-cinnamate</name>
        <dbReference type="ChEBI" id="CHEBI:15669"/>
    </ligand>
</feature>
<feature type="binding site" evidence="3">
    <location>
        <position position="380"/>
    </location>
    <ligand>
        <name>(E)-cinnamate</name>
        <dbReference type="ChEBI" id="CHEBI:15669"/>
    </ligand>
</feature>
<feature type="binding site" evidence="1">
    <location>
        <position position="452"/>
    </location>
    <ligand>
        <name>(E)-cinnamate</name>
        <dbReference type="ChEBI" id="CHEBI:15669"/>
    </ligand>
</feature>
<feature type="binding site" evidence="1">
    <location>
        <position position="480"/>
    </location>
    <ligand>
        <name>(E)-cinnamate</name>
        <dbReference type="ChEBI" id="CHEBI:15669"/>
    </ligand>
</feature>
<feature type="binding site" evidence="3">
    <location>
        <position position="483"/>
    </location>
    <ligand>
        <name>(E)-cinnamate</name>
        <dbReference type="ChEBI" id="CHEBI:15669"/>
    </ligand>
</feature>
<feature type="modified residue" description="2,3-didehydroalanine (Ser)" evidence="4">
    <location>
        <position position="199"/>
    </location>
</feature>
<feature type="cross-link" description="5-imidazolinone (Ala-Gly)" evidence="3">
    <location>
        <begin position="198"/>
        <end position="200"/>
    </location>
</feature>
<sequence length="712" mass="77353">MDATPNGKDAFVVTAANAAGDPLNWAAAAEALSGSHLDEVKRMVAEYRKPAVRLGGQTLTIAQVAATAAHDQGLKVELAESARACVKAISDWVMESMDKGTDSYGITTGFGATSHRRTKQGGALQKELIRFLNAGIFGNGTESNCTLPHTATRAAMLVRVNTLLQGYSGIRFEILEAITKLLNNNITPCLPLRGTITASGDLVPLSYIAGLLTGRPNSKAVGPSGEILNAKEAFELANIGSEFFELQPKEGLALVNGTAVGSGLASIVLFEANILAVLSEVISAIFAEVMQGKPEFTDHLTHKLKHHPGQIEAAAIMEHILDGSSYIKAAKKLHEIDPLQKPKQDRYALRTSPQWLGPQIEVIRFSTKSIEREINSVNDNPLISVSRNKALHGGNFQGTPIGVSMDNTRLAIASIGKLMFAQFSDLVNDYYNNGLPSNLTASRNPSLDYGFKGAEIAMASYCSELQYLANPVTSHVQSAEQHNQDVNSLGLISSRKTNEALEILKLMSSTFLVALCQAIDLRHLEENLKNTVKNVVSQVAKRTLTTGVNGELHPSRFCEKALLKVVEREYTFAYIDDPCSGTYPLMQKLRQVLVDYALANGENEKNLNTSIFQKIASFEEELKTLLPKEVEGARLAYENDQCAIPNKIKDCRSYPLYKFVREELGTSLLTGEKVISPGEECDKVFSAMCQGKIIDPLLECLGEWNGAPLPIC</sequence>